<keyword id="KW-0963">Cytoplasm</keyword>
<keyword id="KW-0448">Lipopolysaccharide biosynthesis</keyword>
<keyword id="KW-0808">Transferase</keyword>
<evidence type="ECO:0000255" key="1">
    <source>
        <dbReference type="HAMAP-Rule" id="MF_00056"/>
    </source>
</evidence>
<comment type="catalytic activity">
    <reaction evidence="1">
        <text>D-arabinose 5-phosphate + phosphoenolpyruvate + H2O = 3-deoxy-alpha-D-manno-2-octulosonate-8-phosphate + phosphate</text>
        <dbReference type="Rhea" id="RHEA:14053"/>
        <dbReference type="ChEBI" id="CHEBI:15377"/>
        <dbReference type="ChEBI" id="CHEBI:43474"/>
        <dbReference type="ChEBI" id="CHEBI:57693"/>
        <dbReference type="ChEBI" id="CHEBI:58702"/>
        <dbReference type="ChEBI" id="CHEBI:85985"/>
        <dbReference type="EC" id="2.5.1.55"/>
    </reaction>
</comment>
<comment type="pathway">
    <text evidence="1">Carbohydrate biosynthesis; 3-deoxy-D-manno-octulosonate biosynthesis; 3-deoxy-D-manno-octulosonate from D-ribulose 5-phosphate: step 2/3.</text>
</comment>
<comment type="pathway">
    <text evidence="1">Bacterial outer membrane biogenesis; lipopolysaccharide biosynthesis.</text>
</comment>
<comment type="subcellular location">
    <subcellularLocation>
        <location evidence="1">Cytoplasm</location>
    </subcellularLocation>
</comment>
<comment type="similarity">
    <text evidence="1">Belongs to the KdsA family.</text>
</comment>
<organism>
    <name type="scientific">Marinobacter nauticus (strain ATCC 700491 / DSM 11845 / VT8)</name>
    <name type="common">Marinobacter aquaeolei</name>
    <dbReference type="NCBI Taxonomy" id="351348"/>
    <lineage>
        <taxon>Bacteria</taxon>
        <taxon>Pseudomonadati</taxon>
        <taxon>Pseudomonadota</taxon>
        <taxon>Gammaproteobacteria</taxon>
        <taxon>Pseudomonadales</taxon>
        <taxon>Marinobacteraceae</taxon>
        <taxon>Marinobacter</taxon>
    </lineage>
</organism>
<protein>
    <recommendedName>
        <fullName evidence="1">2-dehydro-3-deoxyphosphooctonate aldolase</fullName>
        <ecNumber evidence="1">2.5.1.55</ecNumber>
    </recommendedName>
    <alternativeName>
        <fullName evidence="1">3-deoxy-D-manno-octulosonic acid 8-phosphate synthase</fullName>
    </alternativeName>
    <alternativeName>
        <fullName evidence="1">KDO-8-phosphate synthase</fullName>
        <shortName evidence="1">KDO 8-P synthase</shortName>
        <shortName evidence="1">KDOPS</shortName>
    </alternativeName>
    <alternativeName>
        <fullName evidence="1">Phospho-2-dehydro-3-deoxyoctonate aldolase</fullName>
    </alternativeName>
</protein>
<sequence length="281" mass="30411">MARSNLNVSGIEIANDRPFVLFGGMNVLESRELAFEVAEKYVDVCTRLGIPYVFKASFDKANRSSVNSFRGPGLEKGLQILADIKSKFGVPIISDVHEPGQAAPAAEVCDIIQLPAFLSRQTDLVVAMAKTGAVINIKKAQFLAPQEMKHIITKCEEAGNDQIILCERGTSFGYNNLVVDMLGFGIMKQMNVPVFFDVTHALQMPGGRADSAGGRRAQVTDLALAGMSQGLAGLFLEAHPDPDKARCDGPCALRLSQLEPFLERVKAVDDLVKSFKPIDTA</sequence>
<reference key="1">
    <citation type="journal article" date="2011" name="Appl. Environ. Microbiol.">
        <title>Genomic potential of Marinobacter aquaeolei, a biogeochemical 'opportunitroph'.</title>
        <authorList>
            <person name="Singer E."/>
            <person name="Webb E.A."/>
            <person name="Nelson W.C."/>
            <person name="Heidelberg J.F."/>
            <person name="Ivanova N."/>
            <person name="Pati A."/>
            <person name="Edwards K.J."/>
        </authorList>
    </citation>
    <scope>NUCLEOTIDE SEQUENCE [LARGE SCALE GENOMIC DNA]</scope>
    <source>
        <strain>ATCC 700491 / DSM 11845 / VT8</strain>
    </source>
</reference>
<accession>A1TZ47</accession>
<name>KDSA_MARN8</name>
<dbReference type="EC" id="2.5.1.55" evidence="1"/>
<dbReference type="EMBL" id="CP000514">
    <property type="protein sequence ID" value="ABM18016.1"/>
    <property type="molecule type" value="Genomic_DNA"/>
</dbReference>
<dbReference type="RefSeq" id="WP_011784436.1">
    <property type="nucleotide sequence ID" value="NC_008740.1"/>
</dbReference>
<dbReference type="SMR" id="A1TZ47"/>
<dbReference type="STRING" id="351348.Maqu_0920"/>
<dbReference type="KEGG" id="maq:Maqu_0920"/>
<dbReference type="eggNOG" id="COG2877">
    <property type="taxonomic scope" value="Bacteria"/>
</dbReference>
<dbReference type="HOGENOM" id="CLU_036666_0_0_6"/>
<dbReference type="OrthoDB" id="9776934at2"/>
<dbReference type="UniPathway" id="UPA00030"/>
<dbReference type="UniPathway" id="UPA00357">
    <property type="reaction ID" value="UER00474"/>
</dbReference>
<dbReference type="Proteomes" id="UP000000998">
    <property type="component" value="Chromosome"/>
</dbReference>
<dbReference type="GO" id="GO:0005737">
    <property type="term" value="C:cytoplasm"/>
    <property type="evidence" value="ECO:0007669"/>
    <property type="project" value="UniProtKB-SubCell"/>
</dbReference>
<dbReference type="GO" id="GO:0008676">
    <property type="term" value="F:3-deoxy-8-phosphooctulonate synthase activity"/>
    <property type="evidence" value="ECO:0007669"/>
    <property type="project" value="UniProtKB-UniRule"/>
</dbReference>
<dbReference type="GO" id="GO:0019294">
    <property type="term" value="P:keto-3-deoxy-D-manno-octulosonic acid biosynthetic process"/>
    <property type="evidence" value="ECO:0007669"/>
    <property type="project" value="UniProtKB-UniRule"/>
</dbReference>
<dbReference type="Gene3D" id="3.20.20.70">
    <property type="entry name" value="Aldolase class I"/>
    <property type="match status" value="1"/>
</dbReference>
<dbReference type="HAMAP" id="MF_00056">
    <property type="entry name" value="KDO8P_synth"/>
    <property type="match status" value="1"/>
</dbReference>
<dbReference type="InterPro" id="IPR013785">
    <property type="entry name" value="Aldolase_TIM"/>
</dbReference>
<dbReference type="InterPro" id="IPR006218">
    <property type="entry name" value="DAHP1/KDSA"/>
</dbReference>
<dbReference type="InterPro" id="IPR006269">
    <property type="entry name" value="KDO8P_synthase"/>
</dbReference>
<dbReference type="NCBIfam" id="TIGR01362">
    <property type="entry name" value="KDO8P_synth"/>
    <property type="match status" value="1"/>
</dbReference>
<dbReference type="NCBIfam" id="NF003543">
    <property type="entry name" value="PRK05198.1"/>
    <property type="match status" value="1"/>
</dbReference>
<dbReference type="PANTHER" id="PTHR21057">
    <property type="entry name" value="PHOSPHO-2-DEHYDRO-3-DEOXYHEPTONATE ALDOLASE"/>
    <property type="match status" value="1"/>
</dbReference>
<dbReference type="Pfam" id="PF00793">
    <property type="entry name" value="DAHP_synth_1"/>
    <property type="match status" value="1"/>
</dbReference>
<dbReference type="SUPFAM" id="SSF51569">
    <property type="entry name" value="Aldolase"/>
    <property type="match status" value="1"/>
</dbReference>
<gene>
    <name evidence="1" type="primary">kdsA</name>
    <name type="ordered locus">Maqu_0920</name>
</gene>
<feature type="chain" id="PRO_1000003340" description="2-dehydro-3-deoxyphosphooctonate aldolase">
    <location>
        <begin position="1"/>
        <end position="281"/>
    </location>
</feature>
<proteinExistence type="inferred from homology"/>